<proteinExistence type="evidence at transcript level"/>
<keyword id="KW-0514">Muscle protein</keyword>
<feature type="chain" id="PRO_0000186186" description="Troponin T">
    <location>
        <begin position="1"/>
        <end position="384"/>
    </location>
</feature>
<feature type="region of interest" description="Disordered" evidence="2">
    <location>
        <begin position="1"/>
        <end position="23"/>
    </location>
</feature>
<feature type="region of interest" description="Disordered" evidence="2">
    <location>
        <begin position="61"/>
        <end position="169"/>
    </location>
</feature>
<feature type="region of interest" description="Disordered" evidence="2">
    <location>
        <begin position="237"/>
        <end position="257"/>
    </location>
</feature>
<feature type="region of interest" description="Disordered" evidence="2">
    <location>
        <begin position="313"/>
        <end position="384"/>
    </location>
</feature>
<feature type="compositionally biased region" description="Acidic residues" evidence="2">
    <location>
        <begin position="1"/>
        <end position="15"/>
    </location>
</feature>
<feature type="compositionally biased region" description="Basic and acidic residues" evidence="2">
    <location>
        <begin position="61"/>
        <end position="74"/>
    </location>
</feature>
<feature type="compositionally biased region" description="Basic and acidic residues" evidence="2">
    <location>
        <begin position="81"/>
        <end position="126"/>
    </location>
</feature>
<feature type="compositionally biased region" description="Basic and acidic residues" evidence="2">
    <location>
        <begin position="316"/>
        <end position="327"/>
    </location>
</feature>
<feature type="compositionally biased region" description="Acidic residues" evidence="2">
    <location>
        <begin position="328"/>
        <end position="384"/>
    </location>
</feature>
<evidence type="ECO:0000250" key="1"/>
<evidence type="ECO:0000256" key="2">
    <source>
        <dbReference type="SAM" id="MobiDB-lite"/>
    </source>
</evidence>
<evidence type="ECO:0000305" key="3"/>
<accession>Q9XZ71</accession>
<organism>
    <name type="scientific">Periplaneta americana</name>
    <name type="common">American cockroach</name>
    <name type="synonym">Blatta americana</name>
    <dbReference type="NCBI Taxonomy" id="6978"/>
    <lineage>
        <taxon>Eukaryota</taxon>
        <taxon>Metazoa</taxon>
        <taxon>Ecdysozoa</taxon>
        <taxon>Arthropoda</taxon>
        <taxon>Hexapoda</taxon>
        <taxon>Insecta</taxon>
        <taxon>Pterygota</taxon>
        <taxon>Neoptera</taxon>
        <taxon>Polyneoptera</taxon>
        <taxon>Dictyoptera</taxon>
        <taxon>Blattodea</taxon>
        <taxon>Blattoidea</taxon>
        <taxon>Blattidae</taxon>
        <taxon>Blattinae</taxon>
        <taxon>Periplaneta</taxon>
    </lineage>
</organism>
<reference key="1">
    <citation type="submission" date="1999-03" db="EMBL/GenBank/DDBJ databases">
        <title>Molecular characterization of troponin T in Periplaneta americana.</title>
        <authorList>
            <person name="Wolf M.R."/>
            <person name="Marden J.H."/>
        </authorList>
    </citation>
    <scope>NUCLEOTIDE SEQUENCE [MRNA]</scope>
</reference>
<dbReference type="EMBL" id="AF133520">
    <property type="protein sequence ID" value="AAD33603.1"/>
    <property type="molecule type" value="mRNA"/>
</dbReference>
<dbReference type="SMR" id="Q9XZ71"/>
<dbReference type="OrthoDB" id="330499at2759"/>
<dbReference type="GO" id="GO:0005861">
    <property type="term" value="C:troponin complex"/>
    <property type="evidence" value="ECO:0007669"/>
    <property type="project" value="InterPro"/>
</dbReference>
<dbReference type="GO" id="GO:0005523">
    <property type="term" value="F:tropomyosin binding"/>
    <property type="evidence" value="ECO:0007669"/>
    <property type="project" value="TreeGrafter"/>
</dbReference>
<dbReference type="GO" id="GO:0006936">
    <property type="term" value="P:muscle contraction"/>
    <property type="evidence" value="ECO:0007669"/>
    <property type="project" value="TreeGrafter"/>
</dbReference>
<dbReference type="GO" id="GO:0006937">
    <property type="term" value="P:regulation of muscle contraction"/>
    <property type="evidence" value="ECO:0007669"/>
    <property type="project" value="InterPro"/>
</dbReference>
<dbReference type="GO" id="GO:0045214">
    <property type="term" value="P:sarcomere organization"/>
    <property type="evidence" value="ECO:0007669"/>
    <property type="project" value="TreeGrafter"/>
</dbReference>
<dbReference type="FunFam" id="1.20.5.350:FF:000003">
    <property type="entry name" value="Troponin T isoform 5"/>
    <property type="match status" value="1"/>
</dbReference>
<dbReference type="Gene3D" id="1.20.5.350">
    <property type="match status" value="1"/>
</dbReference>
<dbReference type="InterPro" id="IPR027707">
    <property type="entry name" value="TNNT"/>
</dbReference>
<dbReference type="InterPro" id="IPR001978">
    <property type="entry name" value="Troponin"/>
</dbReference>
<dbReference type="InterPro" id="IPR038077">
    <property type="entry name" value="Troponin_sf"/>
</dbReference>
<dbReference type="PANTHER" id="PTHR11521">
    <property type="entry name" value="TROPONIN T"/>
    <property type="match status" value="1"/>
</dbReference>
<dbReference type="PANTHER" id="PTHR11521:SF1">
    <property type="entry name" value="TROPONIN T, SKELETAL MUSCLE"/>
    <property type="match status" value="1"/>
</dbReference>
<dbReference type="Pfam" id="PF00992">
    <property type="entry name" value="Troponin"/>
    <property type="match status" value="1"/>
</dbReference>
<dbReference type="SUPFAM" id="SSF90250">
    <property type="entry name" value="Troponin coil-coiled subunits"/>
    <property type="match status" value="1"/>
</dbReference>
<protein>
    <recommendedName>
        <fullName>Troponin T</fullName>
        <shortName>TnT</shortName>
    </recommendedName>
</protein>
<name>TNNT_PERAM</name>
<sequence>MSDEEEYSEEEEEVPVDTKPRHSVIVVEEKGDPEFVKRQEQKSSALDEQLKEYIAEWRKQRAKEEEDLKKLKDKQSKRKVMRADEEKRMAERKKQEEERRVREIEEKKQRDIEEKRRRLEEAEKKRQAMMQALKEQKQQKGPNFTIQKKDPSFNMSSAQIERNKTKEQLEEEKKISLSFRIKPLEIENLNVDKLKVKATELWDAIVKLETEKYDLEERQKRQDYDLKELKERQKQQLRHKALKKGLDPEALTGKYPPKIQVASKYERRVDTRSYDDKKKLFEGGWATLSSESNEKVWKSKYELFANRSKSKLPKWFGERPGKKKGDPESPEEEEVKADAGVDDELEEPTFEPEPEPEPEEEAAEEEAEEEEEEEEEEEEEEEEE</sequence>
<gene>
    <name type="primary">TNT</name>
</gene>
<comment type="function">
    <text evidence="1">Troponin T is the tropomyosin-binding subunit of troponin, the thin filament regulatory complex which confers calcium-sensitivity to striated muscle actomyosin ATPase activity.</text>
</comment>
<comment type="similarity">
    <text evidence="3">Belongs to the troponin T family.</text>
</comment>